<protein>
    <recommendedName>
        <fullName evidence="1">Ribosomal RNA small subunit methyltransferase G</fullName>
        <ecNumber evidence="1">2.1.1.170</ecNumber>
    </recommendedName>
    <alternativeName>
        <fullName evidence="1">16S rRNA 7-methylguanosine methyltransferase</fullName>
        <shortName evidence="1">16S rRNA m7G methyltransferase</shortName>
    </alternativeName>
</protein>
<comment type="function">
    <text evidence="1">Specifically methylates the N7 position of guanine in position 527 of 16S rRNA.</text>
</comment>
<comment type="catalytic activity">
    <reaction evidence="1">
        <text>guanosine(527) in 16S rRNA + S-adenosyl-L-methionine = N(7)-methylguanosine(527) in 16S rRNA + S-adenosyl-L-homocysteine</text>
        <dbReference type="Rhea" id="RHEA:42732"/>
        <dbReference type="Rhea" id="RHEA-COMP:10209"/>
        <dbReference type="Rhea" id="RHEA-COMP:10210"/>
        <dbReference type="ChEBI" id="CHEBI:57856"/>
        <dbReference type="ChEBI" id="CHEBI:59789"/>
        <dbReference type="ChEBI" id="CHEBI:74269"/>
        <dbReference type="ChEBI" id="CHEBI:74480"/>
        <dbReference type="EC" id="2.1.1.170"/>
    </reaction>
</comment>
<comment type="subcellular location">
    <subcellularLocation>
        <location evidence="1">Cytoplasm</location>
    </subcellularLocation>
</comment>
<comment type="similarity">
    <text evidence="1">Belongs to the methyltransferase superfamily. RNA methyltransferase RsmG family.</text>
</comment>
<evidence type="ECO:0000255" key="1">
    <source>
        <dbReference type="HAMAP-Rule" id="MF_00074"/>
    </source>
</evidence>
<accession>Q17WP3</accession>
<feature type="chain" id="PRO_0000342916" description="Ribosomal RNA small subunit methyltransferase G">
    <location>
        <begin position="1"/>
        <end position="178"/>
    </location>
</feature>
<feature type="binding site" evidence="1">
    <location>
        <position position="54"/>
    </location>
    <ligand>
        <name>S-adenosyl-L-methionine</name>
        <dbReference type="ChEBI" id="CHEBI:59789"/>
    </ligand>
</feature>
<feature type="binding site" evidence="1">
    <location>
        <position position="59"/>
    </location>
    <ligand>
        <name>S-adenosyl-L-methionine</name>
        <dbReference type="ChEBI" id="CHEBI:59789"/>
    </ligand>
</feature>
<feature type="binding site" evidence="1">
    <location>
        <begin position="105"/>
        <end position="106"/>
    </location>
    <ligand>
        <name>S-adenosyl-L-methionine</name>
        <dbReference type="ChEBI" id="CHEBI:59789"/>
    </ligand>
</feature>
<feature type="binding site" evidence="1">
    <location>
        <position position="120"/>
    </location>
    <ligand>
        <name>S-adenosyl-L-methionine</name>
        <dbReference type="ChEBI" id="CHEBI:59789"/>
    </ligand>
</feature>
<keyword id="KW-0963">Cytoplasm</keyword>
<keyword id="KW-0489">Methyltransferase</keyword>
<keyword id="KW-0698">rRNA processing</keyword>
<keyword id="KW-0949">S-adenosyl-L-methionine</keyword>
<keyword id="KW-0808">Transferase</keyword>
<organism>
    <name type="scientific">Helicobacter acinonychis (strain Sheeba)</name>
    <dbReference type="NCBI Taxonomy" id="382638"/>
    <lineage>
        <taxon>Bacteria</taxon>
        <taxon>Pseudomonadati</taxon>
        <taxon>Campylobacterota</taxon>
        <taxon>Epsilonproteobacteria</taxon>
        <taxon>Campylobacterales</taxon>
        <taxon>Helicobacteraceae</taxon>
        <taxon>Helicobacter</taxon>
    </lineage>
</organism>
<dbReference type="EC" id="2.1.1.170" evidence="1"/>
<dbReference type="EMBL" id="AM260522">
    <property type="protein sequence ID" value="CAJ99933.1"/>
    <property type="molecule type" value="Genomic_DNA"/>
</dbReference>
<dbReference type="RefSeq" id="WP_011578040.1">
    <property type="nucleotide sequence ID" value="NC_008229.1"/>
</dbReference>
<dbReference type="SMR" id="Q17WP3"/>
<dbReference type="STRING" id="382638.Hac_1174"/>
<dbReference type="GeneID" id="31758525"/>
<dbReference type="KEGG" id="hac:Hac_1174"/>
<dbReference type="eggNOG" id="COG0357">
    <property type="taxonomic scope" value="Bacteria"/>
</dbReference>
<dbReference type="HOGENOM" id="CLU_065341_2_1_7"/>
<dbReference type="OrthoDB" id="9808773at2"/>
<dbReference type="BioCyc" id="HACI382638:HAC_RS05065-MONOMER"/>
<dbReference type="Proteomes" id="UP000000775">
    <property type="component" value="Chromosome"/>
</dbReference>
<dbReference type="GO" id="GO:0005829">
    <property type="term" value="C:cytosol"/>
    <property type="evidence" value="ECO:0007669"/>
    <property type="project" value="TreeGrafter"/>
</dbReference>
<dbReference type="GO" id="GO:0070043">
    <property type="term" value="F:rRNA (guanine-N7-)-methyltransferase activity"/>
    <property type="evidence" value="ECO:0007669"/>
    <property type="project" value="UniProtKB-UniRule"/>
</dbReference>
<dbReference type="CDD" id="cd02440">
    <property type="entry name" value="AdoMet_MTases"/>
    <property type="match status" value="1"/>
</dbReference>
<dbReference type="FunFam" id="3.40.50.150:FF:000511">
    <property type="entry name" value="Ribosomal RNA small subunit methyltransferase G"/>
    <property type="match status" value="1"/>
</dbReference>
<dbReference type="Gene3D" id="3.40.50.150">
    <property type="entry name" value="Vaccinia Virus protein VP39"/>
    <property type="match status" value="1"/>
</dbReference>
<dbReference type="HAMAP" id="MF_00074">
    <property type="entry name" value="16SrRNA_methyltr_G"/>
    <property type="match status" value="1"/>
</dbReference>
<dbReference type="InterPro" id="IPR003682">
    <property type="entry name" value="rRNA_ssu_MeTfrase_G"/>
</dbReference>
<dbReference type="InterPro" id="IPR029063">
    <property type="entry name" value="SAM-dependent_MTases_sf"/>
</dbReference>
<dbReference type="NCBIfam" id="TIGR00138">
    <property type="entry name" value="rsmG_gidB"/>
    <property type="match status" value="1"/>
</dbReference>
<dbReference type="PANTHER" id="PTHR31760">
    <property type="entry name" value="S-ADENOSYL-L-METHIONINE-DEPENDENT METHYLTRANSFERASES SUPERFAMILY PROTEIN"/>
    <property type="match status" value="1"/>
</dbReference>
<dbReference type="PANTHER" id="PTHR31760:SF0">
    <property type="entry name" value="S-ADENOSYL-L-METHIONINE-DEPENDENT METHYLTRANSFERASES SUPERFAMILY PROTEIN"/>
    <property type="match status" value="1"/>
</dbReference>
<dbReference type="Pfam" id="PF02527">
    <property type="entry name" value="GidB"/>
    <property type="match status" value="1"/>
</dbReference>
<dbReference type="PIRSF" id="PIRSF003078">
    <property type="entry name" value="GidB"/>
    <property type="match status" value="1"/>
</dbReference>
<dbReference type="SUPFAM" id="SSF53335">
    <property type="entry name" value="S-adenosyl-L-methionine-dependent methyltransferases"/>
    <property type="match status" value="1"/>
</dbReference>
<proteinExistence type="inferred from homology"/>
<reference key="1">
    <citation type="journal article" date="2006" name="PLoS Genet.">
        <title>Who ate whom? Adaptive Helicobacter genomic changes that accompanied a host jump from early humans to large felines.</title>
        <authorList>
            <person name="Eppinger M."/>
            <person name="Baar C."/>
            <person name="Linz B."/>
            <person name="Raddatz G."/>
            <person name="Lanz C."/>
            <person name="Keller H."/>
            <person name="Morelli G."/>
            <person name="Gressmann H."/>
            <person name="Achtman M."/>
            <person name="Schuster S.C."/>
        </authorList>
    </citation>
    <scope>NUCLEOTIDE SEQUENCE [LARGE SCALE GENOMIC DNA]</scope>
    <source>
        <strain>Sheeba</strain>
    </source>
</reference>
<name>RSMG_HELAH</name>
<sequence length="178" mass="20647">MNPLLQDYARILLEWNQTHNLSGAKHLSELEPQITDALKPLEFIKDFKSCLDIGSGAGLPAIPLALEKPEVKFILLEPRMKRAAFLNYLKSVLPLKNIEIVKKRLEEYQNPLQVDLITSRAVANSSFLIEKSQRFLNDKGYFLFYKGEQLKDEIAYKDTECFICKKRIYFYKPKESLC</sequence>
<gene>
    <name evidence="1" type="primary">rsmG</name>
    <name type="ordered locus">Hac_1174</name>
</gene>